<evidence type="ECO:0000255" key="1">
    <source>
        <dbReference type="HAMAP-Rule" id="MF_01713"/>
    </source>
</evidence>
<organism>
    <name type="scientific">Lactococcus lactis subsp. cremoris (strain SK11)</name>
    <dbReference type="NCBI Taxonomy" id="272622"/>
    <lineage>
        <taxon>Bacteria</taxon>
        <taxon>Bacillati</taxon>
        <taxon>Bacillota</taxon>
        <taxon>Bacilli</taxon>
        <taxon>Lactobacillales</taxon>
        <taxon>Streptococcaceae</taxon>
        <taxon>Lactococcus</taxon>
        <taxon>Lactococcus cremoris subsp. cremoris</taxon>
    </lineage>
</organism>
<feature type="chain" id="PRO_0000274720" description="Phosphonates import ATP-binding protein PhnC">
    <location>
        <begin position="1"/>
        <end position="246"/>
    </location>
</feature>
<feature type="domain" description="ABC transporter" evidence="1">
    <location>
        <begin position="2"/>
        <end position="246"/>
    </location>
</feature>
<feature type="binding site" evidence="1">
    <location>
        <begin position="35"/>
        <end position="42"/>
    </location>
    <ligand>
        <name>ATP</name>
        <dbReference type="ChEBI" id="CHEBI:30616"/>
    </ligand>
</feature>
<proteinExistence type="inferred from homology"/>
<comment type="function">
    <text evidence="1">Part of the ABC transporter complex PhnCDE involved in phosphonates import. Responsible for energy coupling to the transport system.</text>
</comment>
<comment type="catalytic activity">
    <reaction evidence="1">
        <text>phosphonate(out) + ATP + H2O = phosphonate(in) + ADP + phosphate + H(+)</text>
        <dbReference type="Rhea" id="RHEA:18065"/>
        <dbReference type="ChEBI" id="CHEBI:15377"/>
        <dbReference type="ChEBI" id="CHEBI:15378"/>
        <dbReference type="ChEBI" id="CHEBI:16215"/>
        <dbReference type="ChEBI" id="CHEBI:30616"/>
        <dbReference type="ChEBI" id="CHEBI:43474"/>
        <dbReference type="ChEBI" id="CHEBI:456216"/>
        <dbReference type="EC" id="7.3.2.2"/>
    </reaction>
</comment>
<comment type="subunit">
    <text evidence="1">The complex is composed of two ATP-binding proteins (PhnC), two transmembrane proteins (PhnE) and a solute-binding protein (PhnD).</text>
</comment>
<comment type="subcellular location">
    <subcellularLocation>
        <location evidence="1">Cell membrane</location>
        <topology evidence="1">Peripheral membrane protein</topology>
    </subcellularLocation>
</comment>
<comment type="similarity">
    <text evidence="1">Belongs to the ABC transporter superfamily. Phosphonates importer (TC 3.A.1.9.1) family.</text>
</comment>
<dbReference type="EC" id="7.3.2.2" evidence="1"/>
<dbReference type="EMBL" id="CP000425">
    <property type="protein sequence ID" value="ABJ71942.1"/>
    <property type="molecule type" value="Genomic_DNA"/>
</dbReference>
<dbReference type="RefSeq" id="WP_011675352.1">
    <property type="nucleotide sequence ID" value="NC_008527.1"/>
</dbReference>
<dbReference type="SMR" id="Q032D0"/>
<dbReference type="KEGG" id="llc:LACR_0335"/>
<dbReference type="HOGENOM" id="CLU_000604_1_22_9"/>
<dbReference type="Proteomes" id="UP000000240">
    <property type="component" value="Chromosome"/>
</dbReference>
<dbReference type="GO" id="GO:0005886">
    <property type="term" value="C:plasma membrane"/>
    <property type="evidence" value="ECO:0007669"/>
    <property type="project" value="UniProtKB-SubCell"/>
</dbReference>
<dbReference type="GO" id="GO:0015416">
    <property type="term" value="F:ABC-type phosphonate transporter activity"/>
    <property type="evidence" value="ECO:0007669"/>
    <property type="project" value="UniProtKB-EC"/>
</dbReference>
<dbReference type="GO" id="GO:0005524">
    <property type="term" value="F:ATP binding"/>
    <property type="evidence" value="ECO:0007669"/>
    <property type="project" value="UniProtKB-KW"/>
</dbReference>
<dbReference type="GO" id="GO:0016887">
    <property type="term" value="F:ATP hydrolysis activity"/>
    <property type="evidence" value="ECO:0007669"/>
    <property type="project" value="InterPro"/>
</dbReference>
<dbReference type="CDD" id="cd03256">
    <property type="entry name" value="ABC_PhnC_transporter"/>
    <property type="match status" value="1"/>
</dbReference>
<dbReference type="Gene3D" id="3.40.50.300">
    <property type="entry name" value="P-loop containing nucleotide triphosphate hydrolases"/>
    <property type="match status" value="1"/>
</dbReference>
<dbReference type="InterPro" id="IPR003593">
    <property type="entry name" value="AAA+_ATPase"/>
</dbReference>
<dbReference type="InterPro" id="IPR003439">
    <property type="entry name" value="ABC_transporter-like_ATP-bd"/>
</dbReference>
<dbReference type="InterPro" id="IPR017871">
    <property type="entry name" value="ABC_transporter-like_CS"/>
</dbReference>
<dbReference type="InterPro" id="IPR012693">
    <property type="entry name" value="ABC_transpr_PhnC"/>
</dbReference>
<dbReference type="InterPro" id="IPR050086">
    <property type="entry name" value="MetN_ABC_transporter-like"/>
</dbReference>
<dbReference type="InterPro" id="IPR027417">
    <property type="entry name" value="P-loop_NTPase"/>
</dbReference>
<dbReference type="NCBIfam" id="TIGR02315">
    <property type="entry name" value="ABC_phnC"/>
    <property type="match status" value="1"/>
</dbReference>
<dbReference type="PANTHER" id="PTHR43166">
    <property type="entry name" value="AMINO ACID IMPORT ATP-BINDING PROTEIN"/>
    <property type="match status" value="1"/>
</dbReference>
<dbReference type="PANTHER" id="PTHR43166:SF6">
    <property type="entry name" value="PHOSPHONATES IMPORT ATP-BINDING PROTEIN PHNC"/>
    <property type="match status" value="1"/>
</dbReference>
<dbReference type="Pfam" id="PF00005">
    <property type="entry name" value="ABC_tran"/>
    <property type="match status" value="1"/>
</dbReference>
<dbReference type="SMART" id="SM00382">
    <property type="entry name" value="AAA"/>
    <property type="match status" value="1"/>
</dbReference>
<dbReference type="SUPFAM" id="SSF52540">
    <property type="entry name" value="P-loop containing nucleoside triphosphate hydrolases"/>
    <property type="match status" value="1"/>
</dbReference>
<dbReference type="PROSITE" id="PS00211">
    <property type="entry name" value="ABC_TRANSPORTER_1"/>
    <property type="match status" value="1"/>
</dbReference>
<dbReference type="PROSITE" id="PS50893">
    <property type="entry name" value="ABC_TRANSPORTER_2"/>
    <property type="match status" value="1"/>
</dbReference>
<dbReference type="PROSITE" id="PS51249">
    <property type="entry name" value="PHNC"/>
    <property type="match status" value="1"/>
</dbReference>
<sequence>MIKFENVSKVYPNGTKGLTDVNLQIDQGEFVAIIGTSGAGKSTLIRCVNGLNDVTSGRLFVNDTDVSKLKGKDLRKFRRHVGMIFQSYNLVPRVTVLKNVMFARVPEMNLFKVIFGLFSKEDKLVALDSLNKVGILDKAYIRADQLSGGQQQRVSLARALTQESEILLADEPVSALDPVTAKEVMDDFKRINEELNKTILLNIHHVELALEYASRIIAVKKGKIVYDGPSQEVTKEILDEVYRKEG</sequence>
<name>PHNC_LACLS</name>
<protein>
    <recommendedName>
        <fullName evidence="1">Phosphonates import ATP-binding protein PhnC</fullName>
        <ecNumber evidence="1">7.3.2.2</ecNumber>
    </recommendedName>
</protein>
<reference key="1">
    <citation type="journal article" date="2006" name="Proc. Natl. Acad. Sci. U.S.A.">
        <title>Comparative genomics of the lactic acid bacteria.</title>
        <authorList>
            <person name="Makarova K.S."/>
            <person name="Slesarev A."/>
            <person name="Wolf Y.I."/>
            <person name="Sorokin A."/>
            <person name="Mirkin B."/>
            <person name="Koonin E.V."/>
            <person name="Pavlov A."/>
            <person name="Pavlova N."/>
            <person name="Karamychev V."/>
            <person name="Polouchine N."/>
            <person name="Shakhova V."/>
            <person name="Grigoriev I."/>
            <person name="Lou Y."/>
            <person name="Rohksar D."/>
            <person name="Lucas S."/>
            <person name="Huang K."/>
            <person name="Goodstein D.M."/>
            <person name="Hawkins T."/>
            <person name="Plengvidhya V."/>
            <person name="Welker D."/>
            <person name="Hughes J."/>
            <person name="Goh Y."/>
            <person name="Benson A."/>
            <person name="Baldwin K."/>
            <person name="Lee J.-H."/>
            <person name="Diaz-Muniz I."/>
            <person name="Dosti B."/>
            <person name="Smeianov V."/>
            <person name="Wechter W."/>
            <person name="Barabote R."/>
            <person name="Lorca G."/>
            <person name="Altermann E."/>
            <person name="Barrangou R."/>
            <person name="Ganesan B."/>
            <person name="Xie Y."/>
            <person name="Rawsthorne H."/>
            <person name="Tamir D."/>
            <person name="Parker C."/>
            <person name="Breidt F."/>
            <person name="Broadbent J.R."/>
            <person name="Hutkins R."/>
            <person name="O'Sullivan D."/>
            <person name="Steele J."/>
            <person name="Unlu G."/>
            <person name="Saier M.H. Jr."/>
            <person name="Klaenhammer T."/>
            <person name="Richardson P."/>
            <person name="Kozyavkin S."/>
            <person name="Weimer B.C."/>
            <person name="Mills D.A."/>
        </authorList>
    </citation>
    <scope>NUCLEOTIDE SEQUENCE [LARGE SCALE GENOMIC DNA]</scope>
    <source>
        <strain>SK11</strain>
    </source>
</reference>
<accession>Q032D0</accession>
<gene>
    <name evidence="1" type="primary">phnC</name>
    <name type="ordered locus">LACR_0335</name>
</gene>
<keyword id="KW-0067">ATP-binding</keyword>
<keyword id="KW-1003">Cell membrane</keyword>
<keyword id="KW-0472">Membrane</keyword>
<keyword id="KW-0547">Nucleotide-binding</keyword>
<keyword id="KW-0918">Phosphonate transport</keyword>
<keyword id="KW-1278">Translocase</keyword>
<keyword id="KW-0813">Transport</keyword>